<name>YCIB_ECO5E</name>
<comment type="function">
    <text evidence="1">Plays a role in cell envelope biogenesis, maintenance of cell envelope integrity and membrane homeostasis.</text>
</comment>
<comment type="subcellular location">
    <subcellularLocation>
        <location evidence="1">Cell inner membrane</location>
        <topology evidence="1">Multi-pass membrane protein</topology>
    </subcellularLocation>
</comment>
<comment type="similarity">
    <text evidence="1">Belongs to the YciB family.</text>
</comment>
<proteinExistence type="inferred from homology"/>
<gene>
    <name evidence="1" type="primary">yciB</name>
    <name type="ordered locus">ECH74115_1741</name>
</gene>
<keyword id="KW-0997">Cell inner membrane</keyword>
<keyword id="KW-1003">Cell membrane</keyword>
<keyword id="KW-0472">Membrane</keyword>
<keyword id="KW-0812">Transmembrane</keyword>
<keyword id="KW-1133">Transmembrane helix</keyword>
<protein>
    <recommendedName>
        <fullName evidence="1">Inner membrane-spanning protein YciB</fullName>
    </recommendedName>
</protein>
<dbReference type="EMBL" id="CP001164">
    <property type="protein sequence ID" value="ACI39473.1"/>
    <property type="molecule type" value="Genomic_DNA"/>
</dbReference>
<dbReference type="RefSeq" id="WP_000808667.1">
    <property type="nucleotide sequence ID" value="NC_011353.1"/>
</dbReference>
<dbReference type="KEGG" id="ecf:ECH74115_1741"/>
<dbReference type="HOGENOM" id="CLU_089554_2_0_6"/>
<dbReference type="GO" id="GO:0005886">
    <property type="term" value="C:plasma membrane"/>
    <property type="evidence" value="ECO:0007669"/>
    <property type="project" value="UniProtKB-SubCell"/>
</dbReference>
<dbReference type="HAMAP" id="MF_00189">
    <property type="entry name" value="YciB"/>
    <property type="match status" value="1"/>
</dbReference>
<dbReference type="InterPro" id="IPR006008">
    <property type="entry name" value="YciB"/>
</dbReference>
<dbReference type="NCBIfam" id="TIGR00997">
    <property type="entry name" value="ispZ"/>
    <property type="match status" value="1"/>
</dbReference>
<dbReference type="NCBIfam" id="NF001324">
    <property type="entry name" value="PRK00259.1-2"/>
    <property type="match status" value="1"/>
</dbReference>
<dbReference type="NCBIfam" id="NF001325">
    <property type="entry name" value="PRK00259.1-3"/>
    <property type="match status" value="1"/>
</dbReference>
<dbReference type="NCBIfam" id="NF001326">
    <property type="entry name" value="PRK00259.1-4"/>
    <property type="match status" value="1"/>
</dbReference>
<dbReference type="PANTHER" id="PTHR36917:SF1">
    <property type="entry name" value="INNER MEMBRANE-SPANNING PROTEIN YCIB"/>
    <property type="match status" value="1"/>
</dbReference>
<dbReference type="PANTHER" id="PTHR36917">
    <property type="entry name" value="INTRACELLULAR SEPTATION PROTEIN A-RELATED"/>
    <property type="match status" value="1"/>
</dbReference>
<dbReference type="Pfam" id="PF04279">
    <property type="entry name" value="IspA"/>
    <property type="match status" value="1"/>
</dbReference>
<accession>B5YYG0</accession>
<sequence>MKQFLDFLPLVVFFAFYKIYDIYAATAALIVATAIVLIYSWVRFRKVEKMALITFVLVVVFGGLTLFFHNDEFIKWKVTVIYALFAGALLVSQWVMKKPLIQRMLGKELTLPQPVWSKLNLAWAVFFILCGLANIYIAFWLPQNIWVNFKVFGLTALTLIFTLLSGIYIYRHMPQEDKS</sequence>
<reference key="1">
    <citation type="journal article" date="2011" name="Proc. Natl. Acad. Sci. U.S.A.">
        <title>Genomic anatomy of Escherichia coli O157:H7 outbreaks.</title>
        <authorList>
            <person name="Eppinger M."/>
            <person name="Mammel M.K."/>
            <person name="Leclerc J.E."/>
            <person name="Ravel J."/>
            <person name="Cebula T.A."/>
        </authorList>
    </citation>
    <scope>NUCLEOTIDE SEQUENCE [LARGE SCALE GENOMIC DNA]</scope>
    <source>
        <strain>EC4115 / EHEC</strain>
    </source>
</reference>
<organism>
    <name type="scientific">Escherichia coli O157:H7 (strain EC4115 / EHEC)</name>
    <dbReference type="NCBI Taxonomy" id="444450"/>
    <lineage>
        <taxon>Bacteria</taxon>
        <taxon>Pseudomonadati</taxon>
        <taxon>Pseudomonadota</taxon>
        <taxon>Gammaproteobacteria</taxon>
        <taxon>Enterobacterales</taxon>
        <taxon>Enterobacteriaceae</taxon>
        <taxon>Escherichia</taxon>
    </lineage>
</organism>
<feature type="chain" id="PRO_1000098880" description="Inner membrane-spanning protein YciB">
    <location>
        <begin position="1"/>
        <end position="179"/>
    </location>
</feature>
<feature type="transmembrane region" description="Helical" evidence="1">
    <location>
        <begin position="22"/>
        <end position="42"/>
    </location>
</feature>
<feature type="transmembrane region" description="Helical" evidence="1">
    <location>
        <begin position="50"/>
        <end position="70"/>
    </location>
</feature>
<feature type="transmembrane region" description="Helical" evidence="1">
    <location>
        <begin position="76"/>
        <end position="96"/>
    </location>
</feature>
<feature type="transmembrane region" description="Helical" evidence="1">
    <location>
        <begin position="121"/>
        <end position="141"/>
    </location>
</feature>
<feature type="transmembrane region" description="Helical" evidence="1">
    <location>
        <begin position="149"/>
        <end position="169"/>
    </location>
</feature>
<evidence type="ECO:0000255" key="1">
    <source>
        <dbReference type="HAMAP-Rule" id="MF_00189"/>
    </source>
</evidence>